<gene>
    <name type="primary">nadB</name>
    <name type="ordered locus">Atu4097</name>
    <name type="ORF">AGR_L_1513</name>
</gene>
<reference key="1">
    <citation type="journal article" date="2001" name="Science">
        <title>The genome of the natural genetic engineer Agrobacterium tumefaciens C58.</title>
        <authorList>
            <person name="Wood D.W."/>
            <person name="Setubal J.C."/>
            <person name="Kaul R."/>
            <person name="Monks D.E."/>
            <person name="Kitajima J.P."/>
            <person name="Okura V.K."/>
            <person name="Zhou Y."/>
            <person name="Chen L."/>
            <person name="Wood G.E."/>
            <person name="Almeida N.F. Jr."/>
            <person name="Woo L."/>
            <person name="Chen Y."/>
            <person name="Paulsen I.T."/>
            <person name="Eisen J.A."/>
            <person name="Karp P.D."/>
            <person name="Bovee D. Sr."/>
            <person name="Chapman P."/>
            <person name="Clendenning J."/>
            <person name="Deatherage G."/>
            <person name="Gillet W."/>
            <person name="Grant C."/>
            <person name="Kutyavin T."/>
            <person name="Levy R."/>
            <person name="Li M.-J."/>
            <person name="McClelland E."/>
            <person name="Palmieri A."/>
            <person name="Raymond C."/>
            <person name="Rouse G."/>
            <person name="Saenphimmachak C."/>
            <person name="Wu Z."/>
            <person name="Romero P."/>
            <person name="Gordon D."/>
            <person name="Zhang S."/>
            <person name="Yoo H."/>
            <person name="Tao Y."/>
            <person name="Biddle P."/>
            <person name="Jung M."/>
            <person name="Krespan W."/>
            <person name="Perry M."/>
            <person name="Gordon-Kamm B."/>
            <person name="Liao L."/>
            <person name="Kim S."/>
            <person name="Hendrick C."/>
            <person name="Zhao Z.-Y."/>
            <person name="Dolan M."/>
            <person name="Chumley F."/>
            <person name="Tingey S.V."/>
            <person name="Tomb J.-F."/>
            <person name="Gordon M.P."/>
            <person name="Olson M.V."/>
            <person name="Nester E.W."/>
        </authorList>
    </citation>
    <scope>NUCLEOTIDE SEQUENCE [LARGE SCALE GENOMIC DNA]</scope>
    <source>
        <strain>C58 / ATCC 33970</strain>
    </source>
</reference>
<reference key="2">
    <citation type="journal article" date="2001" name="Science">
        <title>Genome sequence of the plant pathogen and biotechnology agent Agrobacterium tumefaciens C58.</title>
        <authorList>
            <person name="Goodner B."/>
            <person name="Hinkle G."/>
            <person name="Gattung S."/>
            <person name="Miller N."/>
            <person name="Blanchard M."/>
            <person name="Qurollo B."/>
            <person name="Goldman B.S."/>
            <person name="Cao Y."/>
            <person name="Askenazi M."/>
            <person name="Halling C."/>
            <person name="Mullin L."/>
            <person name="Houmiel K."/>
            <person name="Gordon J."/>
            <person name="Vaudin M."/>
            <person name="Iartchouk O."/>
            <person name="Epp A."/>
            <person name="Liu F."/>
            <person name="Wollam C."/>
            <person name="Allinger M."/>
            <person name="Doughty D."/>
            <person name="Scott C."/>
            <person name="Lappas C."/>
            <person name="Markelz B."/>
            <person name="Flanagan C."/>
            <person name="Crowell C."/>
            <person name="Gurson J."/>
            <person name="Lomo C."/>
            <person name="Sear C."/>
            <person name="Strub G."/>
            <person name="Cielo C."/>
            <person name="Slater S."/>
        </authorList>
    </citation>
    <scope>NUCLEOTIDE SEQUENCE [LARGE SCALE GENOMIC DNA]</scope>
    <source>
        <strain>C58 / ATCC 33970</strain>
    </source>
</reference>
<feature type="chain" id="PRO_0000184376" description="L-aspartate oxidase">
    <location>
        <begin position="1"/>
        <end position="522"/>
    </location>
</feature>
<feature type="active site" description="Proton donor/acceptor" evidence="1">
    <location>
        <position position="277"/>
    </location>
</feature>
<feature type="binding site" evidence="1">
    <location>
        <begin position="16"/>
        <end position="19"/>
    </location>
    <ligand>
        <name>FAD</name>
        <dbReference type="ChEBI" id="CHEBI:57692"/>
    </ligand>
</feature>
<feature type="binding site" evidence="1">
    <location>
        <begin position="45"/>
        <end position="52"/>
    </location>
    <ligand>
        <name>FAD</name>
        <dbReference type="ChEBI" id="CHEBI:57692"/>
    </ligand>
</feature>
<feature type="binding site" evidence="1">
    <location>
        <position position="360"/>
    </location>
    <ligand>
        <name>FAD</name>
        <dbReference type="ChEBI" id="CHEBI:57692"/>
    </ligand>
</feature>
<feature type="binding site" evidence="1">
    <location>
        <begin position="376"/>
        <end position="377"/>
    </location>
    <ligand>
        <name>FAD</name>
        <dbReference type="ChEBI" id="CHEBI:57692"/>
    </ligand>
</feature>
<feature type="site" description="Important in orienting the L-aspartate substrate" evidence="1">
    <location>
        <position position="117"/>
    </location>
</feature>
<dbReference type="EC" id="1.4.3.16" evidence="1"/>
<dbReference type="EMBL" id="AE007870">
    <property type="protein sequence ID" value="AAK89334.1"/>
    <property type="molecule type" value="Genomic_DNA"/>
</dbReference>
<dbReference type="PIR" id="AD3060">
    <property type="entry name" value="AD3060"/>
</dbReference>
<dbReference type="PIR" id="D98226">
    <property type="entry name" value="D98226"/>
</dbReference>
<dbReference type="RefSeq" id="NP_356549.1">
    <property type="nucleotide sequence ID" value="NC_003063.2"/>
</dbReference>
<dbReference type="RefSeq" id="WP_010973560.1">
    <property type="nucleotide sequence ID" value="NC_003063.2"/>
</dbReference>
<dbReference type="SMR" id="Q8U8J4"/>
<dbReference type="STRING" id="176299.Atu4097"/>
<dbReference type="EnsemblBacteria" id="AAK89334">
    <property type="protein sequence ID" value="AAK89334"/>
    <property type="gene ID" value="Atu4097"/>
</dbReference>
<dbReference type="GeneID" id="1135971"/>
<dbReference type="KEGG" id="atu:Atu4097"/>
<dbReference type="PATRIC" id="fig|176299.10.peg.3915"/>
<dbReference type="eggNOG" id="COG0029">
    <property type="taxonomic scope" value="Bacteria"/>
</dbReference>
<dbReference type="HOGENOM" id="CLU_014312_3_2_5"/>
<dbReference type="OrthoDB" id="9806724at2"/>
<dbReference type="PhylomeDB" id="Q8U8J4"/>
<dbReference type="BioCyc" id="AGRO:ATU4097-MONOMER"/>
<dbReference type="UniPathway" id="UPA00253">
    <property type="reaction ID" value="UER00326"/>
</dbReference>
<dbReference type="Proteomes" id="UP000000813">
    <property type="component" value="Chromosome linear"/>
</dbReference>
<dbReference type="GO" id="GO:0005737">
    <property type="term" value="C:cytoplasm"/>
    <property type="evidence" value="ECO:0007669"/>
    <property type="project" value="UniProtKB-SubCell"/>
</dbReference>
<dbReference type="GO" id="GO:0008734">
    <property type="term" value="F:L-aspartate oxidase activity"/>
    <property type="evidence" value="ECO:0007669"/>
    <property type="project" value="UniProtKB-EC"/>
</dbReference>
<dbReference type="GO" id="GO:0000166">
    <property type="term" value="F:nucleotide binding"/>
    <property type="evidence" value="ECO:0007669"/>
    <property type="project" value="UniProtKB-KW"/>
</dbReference>
<dbReference type="GO" id="GO:0034628">
    <property type="term" value="P:'de novo' NAD biosynthetic process from L-aspartate"/>
    <property type="evidence" value="ECO:0007669"/>
    <property type="project" value="TreeGrafter"/>
</dbReference>
<dbReference type="FunFam" id="3.90.700.10:FF:000002">
    <property type="entry name" value="L-aspartate oxidase"/>
    <property type="match status" value="1"/>
</dbReference>
<dbReference type="Gene3D" id="3.50.50.60">
    <property type="entry name" value="FAD/NAD(P)-binding domain"/>
    <property type="match status" value="1"/>
</dbReference>
<dbReference type="Gene3D" id="1.20.58.100">
    <property type="entry name" value="Fumarate reductase/succinate dehydrogenase flavoprotein-like, C-terminal domain"/>
    <property type="match status" value="1"/>
</dbReference>
<dbReference type="Gene3D" id="3.90.700.10">
    <property type="entry name" value="Succinate dehydrogenase/fumarate reductase flavoprotein, catalytic domain"/>
    <property type="match status" value="1"/>
</dbReference>
<dbReference type="InterPro" id="IPR003953">
    <property type="entry name" value="FAD-dep_OxRdtase_2_FAD-bd"/>
</dbReference>
<dbReference type="InterPro" id="IPR036188">
    <property type="entry name" value="FAD/NAD-bd_sf"/>
</dbReference>
<dbReference type="InterPro" id="IPR037099">
    <property type="entry name" value="Fum_R/Succ_DH_flav-like_C_sf"/>
</dbReference>
<dbReference type="InterPro" id="IPR015939">
    <property type="entry name" value="Fum_Rdtase/Succ_DH_flav-like_C"/>
</dbReference>
<dbReference type="InterPro" id="IPR005288">
    <property type="entry name" value="NadB"/>
</dbReference>
<dbReference type="InterPro" id="IPR027477">
    <property type="entry name" value="Succ_DH/fumarate_Rdtase_cat_sf"/>
</dbReference>
<dbReference type="NCBIfam" id="TIGR00551">
    <property type="entry name" value="nadB"/>
    <property type="match status" value="1"/>
</dbReference>
<dbReference type="NCBIfam" id="NF005701">
    <property type="entry name" value="PRK07512.1"/>
    <property type="match status" value="1"/>
</dbReference>
<dbReference type="PANTHER" id="PTHR42716">
    <property type="entry name" value="L-ASPARTATE OXIDASE"/>
    <property type="match status" value="1"/>
</dbReference>
<dbReference type="PANTHER" id="PTHR42716:SF2">
    <property type="entry name" value="L-ASPARTATE OXIDASE, CHLOROPLASTIC"/>
    <property type="match status" value="1"/>
</dbReference>
<dbReference type="Pfam" id="PF00890">
    <property type="entry name" value="FAD_binding_2"/>
    <property type="match status" value="1"/>
</dbReference>
<dbReference type="Pfam" id="PF02910">
    <property type="entry name" value="Succ_DH_flav_C"/>
    <property type="match status" value="1"/>
</dbReference>
<dbReference type="PRINTS" id="PR00368">
    <property type="entry name" value="FADPNR"/>
</dbReference>
<dbReference type="SUPFAM" id="SSF51905">
    <property type="entry name" value="FAD/NAD(P)-binding domain"/>
    <property type="match status" value="1"/>
</dbReference>
<dbReference type="SUPFAM" id="SSF46977">
    <property type="entry name" value="Succinate dehydrogenase/fumarate reductase flavoprotein C-terminal domain"/>
    <property type="match status" value="1"/>
</dbReference>
<dbReference type="SUPFAM" id="SSF56425">
    <property type="entry name" value="Succinate dehydrogenase/fumarate reductase flavoprotein, catalytic domain"/>
    <property type="match status" value="1"/>
</dbReference>
<accession>Q8U8J4</accession>
<evidence type="ECO:0000250" key="1">
    <source>
        <dbReference type="UniProtKB" id="P10902"/>
    </source>
</evidence>
<evidence type="ECO:0000305" key="2"/>
<organism>
    <name type="scientific">Agrobacterium fabrum (strain C58 / ATCC 33970)</name>
    <name type="common">Agrobacterium tumefaciens (strain C58)</name>
    <dbReference type="NCBI Taxonomy" id="176299"/>
    <lineage>
        <taxon>Bacteria</taxon>
        <taxon>Pseudomonadati</taxon>
        <taxon>Pseudomonadota</taxon>
        <taxon>Alphaproteobacteria</taxon>
        <taxon>Hyphomicrobiales</taxon>
        <taxon>Rhizobiaceae</taxon>
        <taxon>Rhizobium/Agrobacterium group</taxon>
        <taxon>Agrobacterium</taxon>
        <taxon>Agrobacterium tumefaciens complex</taxon>
    </lineage>
</organism>
<sequence length="522" mass="53952">MSEFLPQRDWTVIVGSGMAGLMAAMTLAPQPVLLVTRGALGGETSSAWAQGGIAASLGPDDRAALHVADTLAAGDGLCDEDMVVGIVSSAPAVIDALERAGVRFDRDAGGNYVFGLEAAHSRRRILHAEGDGSGAAIVRALTDAVRRTPSITVLEGTEVRRLLTEDSVIAGLACAGPNGSFLLPASQVILATGGLGGLYDATTNPSGNFGQGIMLAARAGAILADMEFVQFHPTALSSPRRPLALVSEAVRGEGALLLNENGERFMAAVPGAELASRDIVARAIDREILRGGQVFLDARQALGSGFASRFPSIDLLCREAGIDPARELVPVRPAVHYHMGGVATDNKGRSSVRGLWVAGETACTGLHGANRLASNSLLEAAAMGMRAAQDIAGRPAPAARSAAAVSPNATADFSPADLAAVRPIVSRHLGIVRHAAGLAEAIRDLLPLAERNGPASDPAVVALSIAVFAALRRESRGAHFRDDFSQKDAKAMRRRLSLNDVVTVAHEFSSSSLATAGFARSA</sequence>
<comment type="function">
    <text evidence="1">Catalyzes the oxidation of L-aspartate to iminoaspartate, the first step in the de novo biosynthesis of NAD(+).</text>
</comment>
<comment type="catalytic activity">
    <reaction evidence="1">
        <text>L-aspartate + O2 = iminosuccinate + H2O2</text>
        <dbReference type="Rhea" id="RHEA:25876"/>
        <dbReference type="ChEBI" id="CHEBI:15379"/>
        <dbReference type="ChEBI" id="CHEBI:16240"/>
        <dbReference type="ChEBI" id="CHEBI:29991"/>
        <dbReference type="ChEBI" id="CHEBI:77875"/>
        <dbReference type="EC" id="1.4.3.16"/>
    </reaction>
    <physiologicalReaction direction="left-to-right" evidence="1">
        <dbReference type="Rhea" id="RHEA:25877"/>
    </physiologicalReaction>
</comment>
<comment type="cofactor">
    <cofactor evidence="1">
        <name>FAD</name>
        <dbReference type="ChEBI" id="CHEBI:57692"/>
    </cofactor>
    <text evidence="1">Binds 1 FAD per subunit.</text>
</comment>
<comment type="pathway">
    <text evidence="1">Cofactor biosynthesis; NAD(+) biosynthesis; iminoaspartate from L-aspartate (oxidase route): step 1/1.</text>
</comment>
<comment type="subcellular location">
    <subcellularLocation>
        <location evidence="1">Cytoplasm</location>
    </subcellularLocation>
</comment>
<comment type="similarity">
    <text evidence="2">Belongs to the FAD-dependent oxidoreductase 2 family. NadB subfamily.</text>
</comment>
<protein>
    <recommendedName>
        <fullName evidence="1">L-aspartate oxidase</fullName>
        <shortName evidence="1">LASPO</shortName>
        <ecNumber evidence="1">1.4.3.16</ecNumber>
    </recommendedName>
    <alternativeName>
        <fullName>Quinolinate synthase B</fullName>
    </alternativeName>
</protein>
<proteinExistence type="inferred from homology"/>
<name>NADB_AGRFC</name>
<keyword id="KW-0963">Cytoplasm</keyword>
<keyword id="KW-0274">FAD</keyword>
<keyword id="KW-0285">Flavoprotein</keyword>
<keyword id="KW-0547">Nucleotide-binding</keyword>
<keyword id="KW-0560">Oxidoreductase</keyword>
<keyword id="KW-0662">Pyridine nucleotide biosynthesis</keyword>
<keyword id="KW-1185">Reference proteome</keyword>